<accession>O83220</accession>
<comment type="function">
    <text evidence="1">One of the primary rRNA binding proteins, this protein initially binds near the 5'-end of the 23S rRNA. It is important during the early stages of 50S assembly. It makes multiple contacts with different domains of the 23S rRNA in the assembled 50S subunit and ribosome.</text>
</comment>
<comment type="function">
    <text evidence="1">Forms part of the polypeptide exit tunnel.</text>
</comment>
<comment type="subunit">
    <text evidence="1">Part of the 50S ribosomal subunit.</text>
</comment>
<comment type="similarity">
    <text evidence="1">Belongs to the universal ribosomal protein uL4 family.</text>
</comment>
<keyword id="KW-1185">Reference proteome</keyword>
<keyword id="KW-0687">Ribonucleoprotein</keyword>
<keyword id="KW-0689">Ribosomal protein</keyword>
<keyword id="KW-0694">RNA-binding</keyword>
<keyword id="KW-0699">rRNA-binding</keyword>
<proteinExistence type="inferred from homology"/>
<organism>
    <name type="scientific">Treponema pallidum (strain Nichols)</name>
    <dbReference type="NCBI Taxonomy" id="243276"/>
    <lineage>
        <taxon>Bacteria</taxon>
        <taxon>Pseudomonadati</taxon>
        <taxon>Spirochaetota</taxon>
        <taxon>Spirochaetia</taxon>
        <taxon>Spirochaetales</taxon>
        <taxon>Treponemataceae</taxon>
        <taxon>Treponema</taxon>
    </lineage>
</organism>
<protein>
    <recommendedName>
        <fullName evidence="1">Large ribosomal subunit protein uL4</fullName>
    </recommendedName>
    <alternativeName>
        <fullName evidence="3">50S ribosomal protein L4</fullName>
    </alternativeName>
</protein>
<dbReference type="EMBL" id="AE000520">
    <property type="protein sequence ID" value="AAC65175.1"/>
    <property type="molecule type" value="Genomic_DNA"/>
</dbReference>
<dbReference type="PIR" id="H71354">
    <property type="entry name" value="H71354"/>
</dbReference>
<dbReference type="RefSeq" id="WP_010881637.1">
    <property type="nucleotide sequence ID" value="NC_021490.2"/>
</dbReference>
<dbReference type="SMR" id="O83220"/>
<dbReference type="STRING" id="243276.TP_0190"/>
<dbReference type="EnsemblBacteria" id="AAC65175">
    <property type="protein sequence ID" value="AAC65175"/>
    <property type="gene ID" value="TP_0190"/>
</dbReference>
<dbReference type="GeneID" id="93875978"/>
<dbReference type="KEGG" id="tpa:TP_0190"/>
<dbReference type="KEGG" id="tpw:TPANIC_0190"/>
<dbReference type="eggNOG" id="COG0088">
    <property type="taxonomic scope" value="Bacteria"/>
</dbReference>
<dbReference type="HOGENOM" id="CLU_041575_5_2_12"/>
<dbReference type="OrthoDB" id="9803201at2"/>
<dbReference type="Proteomes" id="UP000000811">
    <property type="component" value="Chromosome"/>
</dbReference>
<dbReference type="GO" id="GO:1990904">
    <property type="term" value="C:ribonucleoprotein complex"/>
    <property type="evidence" value="ECO:0007669"/>
    <property type="project" value="UniProtKB-KW"/>
</dbReference>
<dbReference type="GO" id="GO:0005840">
    <property type="term" value="C:ribosome"/>
    <property type="evidence" value="ECO:0007669"/>
    <property type="project" value="UniProtKB-KW"/>
</dbReference>
<dbReference type="GO" id="GO:0019843">
    <property type="term" value="F:rRNA binding"/>
    <property type="evidence" value="ECO:0007669"/>
    <property type="project" value="UniProtKB-UniRule"/>
</dbReference>
<dbReference type="GO" id="GO:0003735">
    <property type="term" value="F:structural constituent of ribosome"/>
    <property type="evidence" value="ECO:0007669"/>
    <property type="project" value="InterPro"/>
</dbReference>
<dbReference type="GO" id="GO:0006412">
    <property type="term" value="P:translation"/>
    <property type="evidence" value="ECO:0007669"/>
    <property type="project" value="UniProtKB-UniRule"/>
</dbReference>
<dbReference type="Gene3D" id="3.40.1370.10">
    <property type="match status" value="1"/>
</dbReference>
<dbReference type="HAMAP" id="MF_01328_B">
    <property type="entry name" value="Ribosomal_uL4_B"/>
    <property type="match status" value="1"/>
</dbReference>
<dbReference type="InterPro" id="IPR002136">
    <property type="entry name" value="Ribosomal_uL4"/>
</dbReference>
<dbReference type="InterPro" id="IPR013005">
    <property type="entry name" value="Ribosomal_uL4-like"/>
</dbReference>
<dbReference type="InterPro" id="IPR023574">
    <property type="entry name" value="Ribosomal_uL4_dom_sf"/>
</dbReference>
<dbReference type="NCBIfam" id="TIGR03953">
    <property type="entry name" value="rplD_bact"/>
    <property type="match status" value="1"/>
</dbReference>
<dbReference type="PANTHER" id="PTHR10746">
    <property type="entry name" value="50S RIBOSOMAL PROTEIN L4"/>
    <property type="match status" value="1"/>
</dbReference>
<dbReference type="PANTHER" id="PTHR10746:SF6">
    <property type="entry name" value="LARGE RIBOSOMAL SUBUNIT PROTEIN UL4M"/>
    <property type="match status" value="1"/>
</dbReference>
<dbReference type="Pfam" id="PF00573">
    <property type="entry name" value="Ribosomal_L4"/>
    <property type="match status" value="1"/>
</dbReference>
<dbReference type="SUPFAM" id="SSF52166">
    <property type="entry name" value="Ribosomal protein L4"/>
    <property type="match status" value="1"/>
</dbReference>
<feature type="chain" id="PRO_0000129304" description="Large ribosomal subunit protein uL4">
    <location>
        <begin position="1"/>
        <end position="216"/>
    </location>
</feature>
<feature type="region of interest" description="Disordered" evidence="2">
    <location>
        <begin position="51"/>
        <end position="78"/>
    </location>
</feature>
<feature type="compositionally biased region" description="Basic residues" evidence="2">
    <location>
        <begin position="64"/>
        <end position="76"/>
    </location>
</feature>
<evidence type="ECO:0000255" key="1">
    <source>
        <dbReference type="HAMAP-Rule" id="MF_01328"/>
    </source>
</evidence>
<evidence type="ECO:0000256" key="2">
    <source>
        <dbReference type="SAM" id="MobiDB-lite"/>
    </source>
</evidence>
<evidence type="ECO:0000305" key="3"/>
<gene>
    <name evidence="1" type="primary">rplD</name>
    <name type="ordered locus">TP_0190</name>
</gene>
<sequence length="216" mass="24179">MEKTVYSVEGVALRSVELDESVFGLSVNRGVIYYAINSELSNKRLGTACTKGRSEVHGSNTKPYKQKGTGRARRGDKKSPLLVGGGTIFGPKPRDFHYALPKKVKRLAMKSLLSLKAQGDALTVIEDFTVESGKTRDLIQVLRHFAQRERTVFILQNDDALLKRAGRNIPTLSFLSYNRLRAHDLFYGRKVLVLETAVHKIADFYRSKDAAQDGTY</sequence>
<reference key="1">
    <citation type="journal article" date="1998" name="Science">
        <title>Complete genome sequence of Treponema pallidum, the syphilis spirochete.</title>
        <authorList>
            <person name="Fraser C.M."/>
            <person name="Norris S.J."/>
            <person name="Weinstock G.M."/>
            <person name="White O."/>
            <person name="Sutton G.G."/>
            <person name="Dodson R.J."/>
            <person name="Gwinn M.L."/>
            <person name="Hickey E.K."/>
            <person name="Clayton R.A."/>
            <person name="Ketchum K.A."/>
            <person name="Sodergren E."/>
            <person name="Hardham J.M."/>
            <person name="McLeod M.P."/>
            <person name="Salzberg S.L."/>
            <person name="Peterson J.D."/>
            <person name="Khalak H.G."/>
            <person name="Richardson D.L."/>
            <person name="Howell J.K."/>
            <person name="Chidambaram M."/>
            <person name="Utterback T.R."/>
            <person name="McDonald L.A."/>
            <person name="Artiach P."/>
            <person name="Bowman C."/>
            <person name="Cotton M.D."/>
            <person name="Fujii C."/>
            <person name="Garland S.A."/>
            <person name="Hatch B."/>
            <person name="Horst K."/>
            <person name="Roberts K.M."/>
            <person name="Sandusky M."/>
            <person name="Weidman J.F."/>
            <person name="Smith H.O."/>
            <person name="Venter J.C."/>
        </authorList>
    </citation>
    <scope>NUCLEOTIDE SEQUENCE [LARGE SCALE GENOMIC DNA]</scope>
    <source>
        <strain>Nichols</strain>
    </source>
</reference>
<name>RL4_TREPA</name>